<dbReference type="EC" id="2.1.3.-" evidence="1"/>
<dbReference type="EMBL" id="CP000082">
    <property type="protein sequence ID" value="AAZ19797.1"/>
    <property type="molecule type" value="Genomic_DNA"/>
</dbReference>
<dbReference type="RefSeq" id="WP_011281206.1">
    <property type="nucleotide sequence ID" value="NC_007204.1"/>
</dbReference>
<dbReference type="SMR" id="Q4FQB1"/>
<dbReference type="STRING" id="259536.Psyc_1949"/>
<dbReference type="KEGG" id="par:Psyc_1949"/>
<dbReference type="eggNOG" id="COG4106">
    <property type="taxonomic scope" value="Bacteria"/>
</dbReference>
<dbReference type="HOGENOM" id="CLU_078475_0_0_6"/>
<dbReference type="OrthoDB" id="9779941at2"/>
<dbReference type="Proteomes" id="UP000000546">
    <property type="component" value="Chromosome"/>
</dbReference>
<dbReference type="GO" id="GO:0016743">
    <property type="term" value="F:carboxyl- or carbamoyltransferase activity"/>
    <property type="evidence" value="ECO:0007669"/>
    <property type="project" value="UniProtKB-UniRule"/>
</dbReference>
<dbReference type="GO" id="GO:1904047">
    <property type="term" value="F:S-adenosyl-L-methionine binding"/>
    <property type="evidence" value="ECO:0007669"/>
    <property type="project" value="UniProtKB-UniRule"/>
</dbReference>
<dbReference type="GO" id="GO:0002098">
    <property type="term" value="P:tRNA wobble uridine modification"/>
    <property type="evidence" value="ECO:0007669"/>
    <property type="project" value="InterPro"/>
</dbReference>
<dbReference type="CDD" id="cd02440">
    <property type="entry name" value="AdoMet_MTases"/>
    <property type="match status" value="1"/>
</dbReference>
<dbReference type="Gene3D" id="3.40.50.150">
    <property type="entry name" value="Vaccinia Virus protein VP39"/>
    <property type="match status" value="1"/>
</dbReference>
<dbReference type="HAMAP" id="MF_01589">
    <property type="entry name" value="Cx_SAM_synthase"/>
    <property type="match status" value="1"/>
</dbReference>
<dbReference type="InterPro" id="IPR005271">
    <property type="entry name" value="CmoA"/>
</dbReference>
<dbReference type="InterPro" id="IPR041698">
    <property type="entry name" value="Methyltransf_25"/>
</dbReference>
<dbReference type="InterPro" id="IPR029063">
    <property type="entry name" value="SAM-dependent_MTases_sf"/>
</dbReference>
<dbReference type="NCBIfam" id="TIGR00740">
    <property type="entry name" value="carboxy-S-adenosyl-L-methionine synthase CmoA"/>
    <property type="match status" value="1"/>
</dbReference>
<dbReference type="PANTHER" id="PTHR43861:SF2">
    <property type="entry name" value="CARBOXY-S-ADENOSYL-L-METHIONINE SYNTHASE"/>
    <property type="match status" value="1"/>
</dbReference>
<dbReference type="PANTHER" id="PTHR43861">
    <property type="entry name" value="TRANS-ACONITATE 2-METHYLTRANSFERASE-RELATED"/>
    <property type="match status" value="1"/>
</dbReference>
<dbReference type="Pfam" id="PF13649">
    <property type="entry name" value="Methyltransf_25"/>
    <property type="match status" value="1"/>
</dbReference>
<dbReference type="PIRSF" id="PIRSF006325">
    <property type="entry name" value="MeTrfase_bac"/>
    <property type="match status" value="1"/>
</dbReference>
<dbReference type="SUPFAM" id="SSF53335">
    <property type="entry name" value="S-adenosyl-L-methionine-dependent methyltransferases"/>
    <property type="match status" value="1"/>
</dbReference>
<accession>Q4FQB1</accession>
<proteinExistence type="inferred from homology"/>
<feature type="chain" id="PRO_0000314366" description="Carboxy-S-adenosyl-L-methionine synthase">
    <location>
        <begin position="1"/>
        <end position="262"/>
    </location>
</feature>
<feature type="binding site" evidence="1">
    <location>
        <position position="50"/>
    </location>
    <ligand>
        <name>S-adenosyl-L-methionine</name>
        <dbReference type="ChEBI" id="CHEBI:59789"/>
    </ligand>
</feature>
<feature type="binding site" evidence="1">
    <location>
        <begin position="84"/>
        <end position="86"/>
    </location>
    <ligand>
        <name>S-adenosyl-L-methionine</name>
        <dbReference type="ChEBI" id="CHEBI:59789"/>
    </ligand>
</feature>
<feature type="binding site" evidence="1">
    <location>
        <begin position="137"/>
        <end position="138"/>
    </location>
    <ligand>
        <name>S-adenosyl-L-methionine</name>
        <dbReference type="ChEBI" id="CHEBI:59789"/>
    </ligand>
</feature>
<feature type="binding site" evidence="1">
    <location>
        <position position="152"/>
    </location>
    <ligand>
        <name>S-adenosyl-L-methionine</name>
        <dbReference type="ChEBI" id="CHEBI:59789"/>
    </ligand>
</feature>
<feature type="binding site" evidence="1">
    <location>
        <position position="219"/>
    </location>
    <ligand>
        <name>S-adenosyl-L-methionine</name>
        <dbReference type="ChEBI" id="CHEBI:59789"/>
    </ligand>
</feature>
<evidence type="ECO:0000255" key="1">
    <source>
        <dbReference type="HAMAP-Rule" id="MF_01589"/>
    </source>
</evidence>
<gene>
    <name evidence="1" type="primary">cmoA</name>
    <name type="ordered locus">Psyc_1949</name>
</gene>
<reference key="1">
    <citation type="journal article" date="2010" name="Appl. Environ. Microbiol.">
        <title>The genome sequence of Psychrobacter arcticus 273-4, a psychroactive Siberian permafrost bacterium, reveals mechanisms for adaptation to low-temperature growth.</title>
        <authorList>
            <person name="Ayala-del-Rio H.L."/>
            <person name="Chain P.S."/>
            <person name="Grzymski J.J."/>
            <person name="Ponder M.A."/>
            <person name="Ivanova N."/>
            <person name="Bergholz P.W."/>
            <person name="Di Bartolo G."/>
            <person name="Hauser L."/>
            <person name="Land M."/>
            <person name="Bakermans C."/>
            <person name="Rodrigues D."/>
            <person name="Klappenbach J."/>
            <person name="Zarka D."/>
            <person name="Larimer F."/>
            <person name="Richardson P."/>
            <person name="Murray A."/>
            <person name="Thomashow M."/>
            <person name="Tiedje J.M."/>
        </authorList>
    </citation>
    <scope>NUCLEOTIDE SEQUENCE [LARGE SCALE GENOMIC DNA]</scope>
    <source>
        <strain>DSM 17307 / VKM B-2377 / 273-4</strain>
    </source>
</reference>
<protein>
    <recommendedName>
        <fullName evidence="1">Carboxy-S-adenosyl-L-methionine synthase</fullName>
        <shortName evidence="1">Cx-SAM synthase</shortName>
        <ecNumber evidence="1">2.1.3.-</ecNumber>
    </recommendedName>
</protein>
<sequence>MSHPMSQSQPATVKHDTLFTTPLDKAARFSFDEQVVACFPDMIRRSVPGYGQVLAMLPIFARRHCKYRQQGDNGQRVSRIYDLGCSLGAASMTLAGEFESQDLQIKAIDISPAMTTEATTLLSDNYPEHDIEVITADIRDIEFEPCDMVILNLTLQFLPAADRVAVLEKIYAALSEGGILVLTEKTHAFDEQYDAWLVERYYDFKRANGYTEMEISGKRNALENVLITDTLDEHHTRLAQVGFQRHLTWFQFLNFVSIVAFK</sequence>
<comment type="function">
    <text evidence="1">Catalyzes the conversion of S-adenosyl-L-methionine (SAM) to carboxy-S-adenosyl-L-methionine (Cx-SAM).</text>
</comment>
<comment type="catalytic activity">
    <reaction evidence="1">
        <text>prephenate + S-adenosyl-L-methionine = carboxy-S-adenosyl-L-methionine + 3-phenylpyruvate + H2O</text>
        <dbReference type="Rhea" id="RHEA:51692"/>
        <dbReference type="ChEBI" id="CHEBI:15377"/>
        <dbReference type="ChEBI" id="CHEBI:18005"/>
        <dbReference type="ChEBI" id="CHEBI:29934"/>
        <dbReference type="ChEBI" id="CHEBI:59789"/>
        <dbReference type="ChEBI" id="CHEBI:134278"/>
    </reaction>
</comment>
<comment type="subunit">
    <text evidence="1">Homodimer.</text>
</comment>
<comment type="similarity">
    <text evidence="1">Belongs to the class I-like SAM-binding methyltransferase superfamily. Cx-SAM synthase family.</text>
</comment>
<organism>
    <name type="scientific">Psychrobacter arcticus (strain DSM 17307 / VKM B-2377 / 273-4)</name>
    <dbReference type="NCBI Taxonomy" id="259536"/>
    <lineage>
        <taxon>Bacteria</taxon>
        <taxon>Pseudomonadati</taxon>
        <taxon>Pseudomonadota</taxon>
        <taxon>Gammaproteobacteria</taxon>
        <taxon>Moraxellales</taxon>
        <taxon>Moraxellaceae</taxon>
        <taxon>Psychrobacter</taxon>
    </lineage>
</organism>
<keyword id="KW-1185">Reference proteome</keyword>
<keyword id="KW-0949">S-adenosyl-L-methionine</keyword>
<keyword id="KW-0808">Transferase</keyword>
<name>CMOA_PSYA2</name>